<sequence>MTQQKPPAGADLSQTFIRFALDAGVLSFGEFVTKAGRKSPYFFNAGLFNQGAMLGEVAQFYAKTLLASGVQFDVLFGPAYKGITLASATAVALAGMGRDVGFAYNRKEAKDHGEGGTLVGAKLQGKVVIVDDVISAGTSVRESVNMIRAAGAEPAAVLIALDRMEKSGTAEQVGTHSAVQDVQREYGIPVIAIASLKDLLAYLDASQDPALSASREAVAAYRQRYGV</sequence>
<protein>
    <recommendedName>
        <fullName evidence="1">Orotate phosphoribosyltransferase</fullName>
        <shortName evidence="1">OPRT</shortName>
        <shortName evidence="1">OPRTase</shortName>
        <ecNumber evidence="1">2.4.2.10</ecNumber>
    </recommendedName>
</protein>
<name>PYRE_CUPNH</name>
<accession>Q0KF45</accession>
<keyword id="KW-0328">Glycosyltransferase</keyword>
<keyword id="KW-0460">Magnesium</keyword>
<keyword id="KW-0665">Pyrimidine biosynthesis</keyword>
<keyword id="KW-1185">Reference proteome</keyword>
<keyword id="KW-0808">Transferase</keyword>
<dbReference type="EC" id="2.4.2.10" evidence="1"/>
<dbReference type="EMBL" id="AM260479">
    <property type="protein sequence ID" value="CAJ91376.1"/>
    <property type="molecule type" value="Genomic_DNA"/>
</dbReference>
<dbReference type="SMR" id="Q0KF45"/>
<dbReference type="STRING" id="381666.H16_A0224"/>
<dbReference type="KEGG" id="reh:H16_A0224"/>
<dbReference type="PATRIC" id="fig|381666.6.peg.583"/>
<dbReference type="eggNOG" id="COG0461">
    <property type="taxonomic scope" value="Bacteria"/>
</dbReference>
<dbReference type="HOGENOM" id="CLU_074878_0_1_4"/>
<dbReference type="UniPathway" id="UPA00070">
    <property type="reaction ID" value="UER00119"/>
</dbReference>
<dbReference type="Proteomes" id="UP000008210">
    <property type="component" value="Chromosome 1"/>
</dbReference>
<dbReference type="GO" id="GO:0005737">
    <property type="term" value="C:cytoplasm"/>
    <property type="evidence" value="ECO:0007669"/>
    <property type="project" value="TreeGrafter"/>
</dbReference>
<dbReference type="GO" id="GO:0000287">
    <property type="term" value="F:magnesium ion binding"/>
    <property type="evidence" value="ECO:0007669"/>
    <property type="project" value="UniProtKB-UniRule"/>
</dbReference>
<dbReference type="GO" id="GO:0004588">
    <property type="term" value="F:orotate phosphoribosyltransferase activity"/>
    <property type="evidence" value="ECO:0007669"/>
    <property type="project" value="UniProtKB-UniRule"/>
</dbReference>
<dbReference type="GO" id="GO:0006207">
    <property type="term" value="P:'de novo' pyrimidine nucleobase biosynthetic process"/>
    <property type="evidence" value="ECO:0007669"/>
    <property type="project" value="TreeGrafter"/>
</dbReference>
<dbReference type="GO" id="GO:0044205">
    <property type="term" value="P:'de novo' UMP biosynthetic process"/>
    <property type="evidence" value="ECO:0007669"/>
    <property type="project" value="UniProtKB-UniRule"/>
</dbReference>
<dbReference type="GO" id="GO:0046132">
    <property type="term" value="P:pyrimidine ribonucleoside biosynthetic process"/>
    <property type="evidence" value="ECO:0007669"/>
    <property type="project" value="TreeGrafter"/>
</dbReference>
<dbReference type="CDD" id="cd06223">
    <property type="entry name" value="PRTases_typeI"/>
    <property type="match status" value="1"/>
</dbReference>
<dbReference type="FunFam" id="3.40.50.2020:FF:000008">
    <property type="entry name" value="Orotate phosphoribosyltransferase"/>
    <property type="match status" value="1"/>
</dbReference>
<dbReference type="Gene3D" id="3.40.50.2020">
    <property type="match status" value="1"/>
</dbReference>
<dbReference type="HAMAP" id="MF_01208">
    <property type="entry name" value="PyrE"/>
    <property type="match status" value="1"/>
</dbReference>
<dbReference type="InterPro" id="IPR023031">
    <property type="entry name" value="OPRT"/>
</dbReference>
<dbReference type="InterPro" id="IPR004467">
    <property type="entry name" value="Or_phspho_trans_dom"/>
</dbReference>
<dbReference type="InterPro" id="IPR000836">
    <property type="entry name" value="PRibTrfase_dom"/>
</dbReference>
<dbReference type="InterPro" id="IPR029057">
    <property type="entry name" value="PRTase-like"/>
</dbReference>
<dbReference type="NCBIfam" id="TIGR00336">
    <property type="entry name" value="pyrE"/>
    <property type="match status" value="1"/>
</dbReference>
<dbReference type="PANTHER" id="PTHR46683">
    <property type="entry name" value="OROTATE PHOSPHORIBOSYLTRANSFERASE 1-RELATED"/>
    <property type="match status" value="1"/>
</dbReference>
<dbReference type="PANTHER" id="PTHR46683:SF1">
    <property type="entry name" value="OROTATE PHOSPHORIBOSYLTRANSFERASE 1-RELATED"/>
    <property type="match status" value="1"/>
</dbReference>
<dbReference type="Pfam" id="PF00156">
    <property type="entry name" value="Pribosyltran"/>
    <property type="match status" value="1"/>
</dbReference>
<dbReference type="SUPFAM" id="SSF53271">
    <property type="entry name" value="PRTase-like"/>
    <property type="match status" value="1"/>
</dbReference>
<dbReference type="PROSITE" id="PS00103">
    <property type="entry name" value="PUR_PYR_PR_TRANSFER"/>
    <property type="match status" value="1"/>
</dbReference>
<evidence type="ECO:0000255" key="1">
    <source>
        <dbReference type="HAMAP-Rule" id="MF_01208"/>
    </source>
</evidence>
<gene>
    <name evidence="1" type="primary">pyrE</name>
    <name type="ordered locus">H16_A0224</name>
</gene>
<comment type="function">
    <text evidence="1">Catalyzes the transfer of a ribosyl phosphate group from 5-phosphoribose 1-diphosphate to orotate, leading to the formation of orotidine monophosphate (OMP).</text>
</comment>
<comment type="catalytic activity">
    <reaction evidence="1">
        <text>orotidine 5'-phosphate + diphosphate = orotate + 5-phospho-alpha-D-ribose 1-diphosphate</text>
        <dbReference type="Rhea" id="RHEA:10380"/>
        <dbReference type="ChEBI" id="CHEBI:30839"/>
        <dbReference type="ChEBI" id="CHEBI:33019"/>
        <dbReference type="ChEBI" id="CHEBI:57538"/>
        <dbReference type="ChEBI" id="CHEBI:58017"/>
        <dbReference type="EC" id="2.4.2.10"/>
    </reaction>
</comment>
<comment type="cofactor">
    <cofactor evidence="1">
        <name>Mg(2+)</name>
        <dbReference type="ChEBI" id="CHEBI:18420"/>
    </cofactor>
</comment>
<comment type="pathway">
    <text evidence="1">Pyrimidine metabolism; UMP biosynthesis via de novo pathway; UMP from orotate: step 1/2.</text>
</comment>
<comment type="subunit">
    <text evidence="1">Homodimer.</text>
</comment>
<comment type="similarity">
    <text evidence="1">Belongs to the purine/pyrimidine phosphoribosyltransferase family. PyrE subfamily.</text>
</comment>
<reference key="1">
    <citation type="journal article" date="2006" name="Nat. Biotechnol.">
        <title>Genome sequence of the bioplastic-producing 'Knallgas' bacterium Ralstonia eutropha H16.</title>
        <authorList>
            <person name="Pohlmann A."/>
            <person name="Fricke W.F."/>
            <person name="Reinecke F."/>
            <person name="Kusian B."/>
            <person name="Liesegang H."/>
            <person name="Cramm R."/>
            <person name="Eitinger T."/>
            <person name="Ewering C."/>
            <person name="Poetter M."/>
            <person name="Schwartz E."/>
            <person name="Strittmatter A."/>
            <person name="Voss I."/>
            <person name="Gottschalk G."/>
            <person name="Steinbuechel A."/>
            <person name="Friedrich B."/>
            <person name="Bowien B."/>
        </authorList>
    </citation>
    <scope>NUCLEOTIDE SEQUENCE [LARGE SCALE GENOMIC DNA]</scope>
    <source>
        <strain>ATCC 17699 / DSM 428 / KCTC 22496 / NCIMB 10442 / H16 / Stanier 337</strain>
    </source>
</reference>
<organism>
    <name type="scientific">Cupriavidus necator (strain ATCC 17699 / DSM 428 / KCTC 22496 / NCIMB 10442 / H16 / Stanier 337)</name>
    <name type="common">Ralstonia eutropha</name>
    <dbReference type="NCBI Taxonomy" id="381666"/>
    <lineage>
        <taxon>Bacteria</taxon>
        <taxon>Pseudomonadati</taxon>
        <taxon>Pseudomonadota</taxon>
        <taxon>Betaproteobacteria</taxon>
        <taxon>Burkholderiales</taxon>
        <taxon>Burkholderiaceae</taxon>
        <taxon>Cupriavidus</taxon>
    </lineage>
</organism>
<feature type="chain" id="PRO_1000138818" description="Orotate phosphoribosyltransferase">
    <location>
        <begin position="1"/>
        <end position="227"/>
    </location>
</feature>
<feature type="binding site" description="in other chain" evidence="1">
    <location>
        <position position="34"/>
    </location>
    <ligand>
        <name>5-phospho-alpha-D-ribose 1-diphosphate</name>
        <dbReference type="ChEBI" id="CHEBI:58017"/>
        <note>ligand shared between dimeric partners</note>
    </ligand>
</feature>
<feature type="binding site" evidence="1">
    <location>
        <begin position="42"/>
        <end position="43"/>
    </location>
    <ligand>
        <name>orotate</name>
        <dbReference type="ChEBI" id="CHEBI:30839"/>
    </ligand>
</feature>
<feature type="binding site" description="in other chain" evidence="1">
    <location>
        <begin position="80"/>
        <end position="81"/>
    </location>
    <ligand>
        <name>5-phospho-alpha-D-ribose 1-diphosphate</name>
        <dbReference type="ChEBI" id="CHEBI:58017"/>
        <note>ligand shared between dimeric partners</note>
    </ligand>
</feature>
<feature type="binding site" evidence="1">
    <location>
        <position position="106"/>
    </location>
    <ligand>
        <name>5-phospho-alpha-D-ribose 1-diphosphate</name>
        <dbReference type="ChEBI" id="CHEBI:58017"/>
        <note>ligand shared between dimeric partners</note>
    </ligand>
</feature>
<feature type="binding site" description="in other chain" evidence="1">
    <location>
        <position position="107"/>
    </location>
    <ligand>
        <name>5-phospho-alpha-D-ribose 1-diphosphate</name>
        <dbReference type="ChEBI" id="CHEBI:58017"/>
        <note>ligand shared between dimeric partners</note>
    </ligand>
</feature>
<feature type="binding site" evidence="1">
    <location>
        <position position="110"/>
    </location>
    <ligand>
        <name>5-phospho-alpha-D-ribose 1-diphosphate</name>
        <dbReference type="ChEBI" id="CHEBI:58017"/>
        <note>ligand shared between dimeric partners</note>
    </ligand>
</feature>
<feature type="binding site" evidence="1">
    <location>
        <position position="112"/>
    </location>
    <ligand>
        <name>5-phospho-alpha-D-ribose 1-diphosphate</name>
        <dbReference type="ChEBI" id="CHEBI:58017"/>
        <note>ligand shared between dimeric partners</note>
    </ligand>
</feature>
<feature type="binding site" description="in other chain" evidence="1">
    <location>
        <begin position="131"/>
        <end position="139"/>
    </location>
    <ligand>
        <name>5-phospho-alpha-D-ribose 1-diphosphate</name>
        <dbReference type="ChEBI" id="CHEBI:58017"/>
        <note>ligand shared between dimeric partners</note>
    </ligand>
</feature>
<feature type="binding site" evidence="1">
    <location>
        <position position="135"/>
    </location>
    <ligand>
        <name>orotate</name>
        <dbReference type="ChEBI" id="CHEBI:30839"/>
    </ligand>
</feature>
<feature type="binding site" evidence="1">
    <location>
        <position position="163"/>
    </location>
    <ligand>
        <name>orotate</name>
        <dbReference type="ChEBI" id="CHEBI:30839"/>
    </ligand>
</feature>
<proteinExistence type="inferred from homology"/>